<keyword id="KW-0963">Cytoplasm</keyword>
<keyword id="KW-0238">DNA-binding</keyword>
<keyword id="KW-0293">Fruiting body</keyword>
<keyword id="KW-0731">Sigma factor</keyword>
<keyword id="KW-0749">Sporulation</keyword>
<keyword id="KW-0804">Transcription</keyword>
<keyword id="KW-0805">Transcription regulation</keyword>
<gene>
    <name evidence="1" type="primary">rpoD</name>
    <name type="synonym">asgC</name>
    <name type="synonym">sigA</name>
</gene>
<protein>
    <recommendedName>
        <fullName evidence="1">RNA polymerase sigma factor RpoD</fullName>
    </recommendedName>
    <alternativeName>
        <fullName>Sigma-80</fullName>
    </alternativeName>
</protein>
<dbReference type="EMBL" id="U20669">
    <property type="protein sequence ID" value="AAB60208.1"/>
    <property type="molecule type" value="Genomic_DNA"/>
</dbReference>
<dbReference type="EMBL" id="M32347">
    <property type="protein sequence ID" value="AAA25404.1"/>
    <property type="molecule type" value="Genomic_DNA"/>
</dbReference>
<dbReference type="PIR" id="S70834">
    <property type="entry name" value="S70834"/>
</dbReference>
<dbReference type="RefSeq" id="WP_011555174.1">
    <property type="nucleotide sequence ID" value="NZ_JABFNT010000116.1"/>
</dbReference>
<dbReference type="SMR" id="P17531"/>
<dbReference type="GeneID" id="41362486"/>
<dbReference type="OMA" id="AICSVPY"/>
<dbReference type="GO" id="GO:0005737">
    <property type="term" value="C:cytoplasm"/>
    <property type="evidence" value="ECO:0007669"/>
    <property type="project" value="UniProtKB-SubCell"/>
</dbReference>
<dbReference type="GO" id="GO:0003677">
    <property type="term" value="F:DNA binding"/>
    <property type="evidence" value="ECO:0007669"/>
    <property type="project" value="UniProtKB-UniRule"/>
</dbReference>
<dbReference type="GO" id="GO:0016987">
    <property type="term" value="F:sigma factor activity"/>
    <property type="evidence" value="ECO:0007669"/>
    <property type="project" value="UniProtKB-UniRule"/>
</dbReference>
<dbReference type="GO" id="GO:0006352">
    <property type="term" value="P:DNA-templated transcription initiation"/>
    <property type="evidence" value="ECO:0007669"/>
    <property type="project" value="UniProtKB-UniRule"/>
</dbReference>
<dbReference type="GO" id="GO:0030435">
    <property type="term" value="P:sporulation resulting in formation of a cellular spore"/>
    <property type="evidence" value="ECO:0007669"/>
    <property type="project" value="UniProtKB-KW"/>
</dbReference>
<dbReference type="CDD" id="cd06171">
    <property type="entry name" value="Sigma70_r4"/>
    <property type="match status" value="1"/>
</dbReference>
<dbReference type="FunFam" id="1.10.10.10:FF:000002">
    <property type="entry name" value="RNA polymerase sigma factor SigA"/>
    <property type="match status" value="1"/>
</dbReference>
<dbReference type="FunFam" id="1.10.10.10:FF:000004">
    <property type="entry name" value="RNA polymerase sigma factor SigA"/>
    <property type="match status" value="1"/>
</dbReference>
<dbReference type="FunFam" id="1.10.601.10:FF:000001">
    <property type="entry name" value="RNA polymerase sigma factor SigA"/>
    <property type="match status" value="1"/>
</dbReference>
<dbReference type="Gene3D" id="1.10.601.10">
    <property type="entry name" value="RNA Polymerase Primary Sigma Factor"/>
    <property type="match status" value="1"/>
</dbReference>
<dbReference type="Gene3D" id="1.10.220.120">
    <property type="entry name" value="Sigma-70 factor, region 1.1"/>
    <property type="match status" value="1"/>
</dbReference>
<dbReference type="Gene3D" id="1.10.10.10">
    <property type="entry name" value="Winged helix-like DNA-binding domain superfamily/Winged helix DNA-binding domain"/>
    <property type="match status" value="2"/>
</dbReference>
<dbReference type="HAMAP" id="MF_00963">
    <property type="entry name" value="Sigma70_RpoD_SigA"/>
    <property type="match status" value="1"/>
</dbReference>
<dbReference type="InterPro" id="IPR014284">
    <property type="entry name" value="RNA_pol_sigma-70_dom"/>
</dbReference>
<dbReference type="InterPro" id="IPR000943">
    <property type="entry name" value="RNA_pol_sigma70"/>
</dbReference>
<dbReference type="InterPro" id="IPR009042">
    <property type="entry name" value="RNA_pol_sigma70_r1_2"/>
</dbReference>
<dbReference type="InterPro" id="IPR007627">
    <property type="entry name" value="RNA_pol_sigma70_r2"/>
</dbReference>
<dbReference type="InterPro" id="IPR007624">
    <property type="entry name" value="RNA_pol_sigma70_r3"/>
</dbReference>
<dbReference type="InterPro" id="IPR007630">
    <property type="entry name" value="RNA_pol_sigma70_r4"/>
</dbReference>
<dbReference type="InterPro" id="IPR007631">
    <property type="entry name" value="RNA_pol_sigma_70_non-ess"/>
</dbReference>
<dbReference type="InterPro" id="IPR007127">
    <property type="entry name" value="RNA_pol_sigma_70_r1_1"/>
</dbReference>
<dbReference type="InterPro" id="IPR042189">
    <property type="entry name" value="RNA_pol_sigma_70_r1_1_sf"/>
</dbReference>
<dbReference type="InterPro" id="IPR013325">
    <property type="entry name" value="RNA_pol_sigma_r2"/>
</dbReference>
<dbReference type="InterPro" id="IPR013324">
    <property type="entry name" value="RNA_pol_sigma_r3/r4-like"/>
</dbReference>
<dbReference type="InterPro" id="IPR012760">
    <property type="entry name" value="RNA_pol_sigma_RpoD_C"/>
</dbReference>
<dbReference type="InterPro" id="IPR050239">
    <property type="entry name" value="Sigma-70_RNA_pol_init_factors"/>
</dbReference>
<dbReference type="InterPro" id="IPR028630">
    <property type="entry name" value="Sigma70_RpoD"/>
</dbReference>
<dbReference type="InterPro" id="IPR036388">
    <property type="entry name" value="WH-like_DNA-bd_sf"/>
</dbReference>
<dbReference type="NCBIfam" id="NF004208">
    <property type="entry name" value="PRK05658.1"/>
    <property type="match status" value="1"/>
</dbReference>
<dbReference type="NCBIfam" id="TIGR02393">
    <property type="entry name" value="RpoD_Cterm"/>
    <property type="match status" value="1"/>
</dbReference>
<dbReference type="NCBIfam" id="TIGR02937">
    <property type="entry name" value="sigma70-ECF"/>
    <property type="match status" value="1"/>
</dbReference>
<dbReference type="PANTHER" id="PTHR30603">
    <property type="entry name" value="RNA POLYMERASE SIGMA FACTOR RPO"/>
    <property type="match status" value="1"/>
</dbReference>
<dbReference type="PANTHER" id="PTHR30603:SF60">
    <property type="entry name" value="RNA POLYMERASE SIGMA FACTOR RPOD"/>
    <property type="match status" value="1"/>
</dbReference>
<dbReference type="Pfam" id="PF04546">
    <property type="entry name" value="Sigma70_ner"/>
    <property type="match status" value="1"/>
</dbReference>
<dbReference type="Pfam" id="PF03979">
    <property type="entry name" value="Sigma70_r1_1"/>
    <property type="match status" value="1"/>
</dbReference>
<dbReference type="Pfam" id="PF00140">
    <property type="entry name" value="Sigma70_r1_2"/>
    <property type="match status" value="1"/>
</dbReference>
<dbReference type="Pfam" id="PF04542">
    <property type="entry name" value="Sigma70_r2"/>
    <property type="match status" value="1"/>
</dbReference>
<dbReference type="Pfam" id="PF04539">
    <property type="entry name" value="Sigma70_r3"/>
    <property type="match status" value="1"/>
</dbReference>
<dbReference type="Pfam" id="PF04545">
    <property type="entry name" value="Sigma70_r4"/>
    <property type="match status" value="1"/>
</dbReference>
<dbReference type="PRINTS" id="PR00046">
    <property type="entry name" value="SIGMA70FCT"/>
</dbReference>
<dbReference type="SUPFAM" id="SSF88946">
    <property type="entry name" value="Sigma2 domain of RNA polymerase sigma factors"/>
    <property type="match status" value="1"/>
</dbReference>
<dbReference type="SUPFAM" id="SSF88659">
    <property type="entry name" value="Sigma3 and sigma4 domains of RNA polymerase sigma factors"/>
    <property type="match status" value="2"/>
</dbReference>
<dbReference type="PROSITE" id="PS00715">
    <property type="entry name" value="SIGMA70_1"/>
    <property type="match status" value="1"/>
</dbReference>
<dbReference type="PROSITE" id="PS00716">
    <property type="entry name" value="SIGMA70_2"/>
    <property type="match status" value="1"/>
</dbReference>
<proteinExistence type="inferred from homology"/>
<name>RPOD_MYXXA</name>
<comment type="function">
    <text evidence="1 3">Sigma factors are initiation factors that promote the attachment of RNA polymerase to specific initiation sites and are then released. This sigma factor is the primary sigma factor during exponential growth (By similarity). Also required for extracellular A-signal production. The A-signal is the first in a series of extracellular signals that are required for myxspore differentiation in M.xanthus. It is thought to act as a cell-density signal during early development to ensure there are enough cells present to complete fruiting-body morphogenesis. A variant at residue 598 prevents A-signal production in an unknown fashion.</text>
</comment>
<comment type="subunit">
    <text evidence="1">Interacts transiently with the RNA polymerase catalytic core.</text>
</comment>
<comment type="subcellular location">
    <subcellularLocation>
        <location evidence="1">Cytoplasm</location>
    </subcellularLocation>
</comment>
<comment type="similarity">
    <text evidence="1">Belongs to the sigma-70 factor family. RpoD/SigA subfamily.</text>
</comment>
<evidence type="ECO:0000255" key="1">
    <source>
        <dbReference type="HAMAP-Rule" id="MF_00963"/>
    </source>
</evidence>
<evidence type="ECO:0000256" key="2">
    <source>
        <dbReference type="SAM" id="MobiDB-lite"/>
    </source>
</evidence>
<evidence type="ECO:0000269" key="3">
    <source>
    </source>
</evidence>
<organism>
    <name type="scientific">Myxococcus xanthus</name>
    <dbReference type="NCBI Taxonomy" id="34"/>
    <lineage>
        <taxon>Bacteria</taxon>
        <taxon>Pseudomonadati</taxon>
        <taxon>Myxococcota</taxon>
        <taxon>Myxococcia</taxon>
        <taxon>Myxococcales</taxon>
        <taxon>Cystobacterineae</taxon>
        <taxon>Myxococcaceae</taxon>
        <taxon>Myxococcus</taxon>
    </lineage>
</organism>
<feature type="chain" id="PRO_0000093903" description="RNA polymerase sigma factor RpoD">
    <location>
        <begin position="1"/>
        <end position="708"/>
    </location>
</feature>
<feature type="DNA-binding region" description="H-T-H motif" evidence="1">
    <location>
        <begin position="668"/>
        <end position="687"/>
    </location>
</feature>
<feature type="region of interest" description="Disordered" evidence="2">
    <location>
        <begin position="1"/>
        <end position="43"/>
    </location>
</feature>
<feature type="region of interest" description="Disordered" evidence="2">
    <location>
        <begin position="57"/>
        <end position="105"/>
    </location>
</feature>
<feature type="region of interest" description="Disordered" evidence="2">
    <location>
        <begin position="160"/>
        <end position="199"/>
    </location>
</feature>
<feature type="region of interest" description="Disordered" evidence="2">
    <location>
        <begin position="265"/>
        <end position="288"/>
    </location>
</feature>
<feature type="region of interest" description="Sigma-70 factor domain-2" evidence="1">
    <location>
        <begin position="474"/>
        <end position="544"/>
    </location>
</feature>
<feature type="region of interest" description="Sigma-70 factor domain-3" evidence="1">
    <location>
        <begin position="553"/>
        <end position="629"/>
    </location>
</feature>
<feature type="region of interest" description="Sigma-70 factor domain-4" evidence="1">
    <location>
        <begin position="642"/>
        <end position="695"/>
    </location>
</feature>
<feature type="short sequence motif" description="Interaction with polymerase core subunit RpoC">
    <location>
        <begin position="498"/>
        <end position="501"/>
    </location>
</feature>
<feature type="compositionally biased region" description="Low complexity" evidence="2">
    <location>
        <begin position="29"/>
        <end position="38"/>
    </location>
</feature>
<feature type="compositionally biased region" description="Acidic residues" evidence="2">
    <location>
        <begin position="72"/>
        <end position="81"/>
    </location>
</feature>
<feature type="compositionally biased region" description="Low complexity" evidence="2">
    <location>
        <begin position="82"/>
        <end position="91"/>
    </location>
</feature>
<feature type="compositionally biased region" description="Acidic residues" evidence="2">
    <location>
        <begin position="92"/>
        <end position="102"/>
    </location>
</feature>
<feature type="compositionally biased region" description="Acidic residues" evidence="2">
    <location>
        <begin position="173"/>
        <end position="190"/>
    </location>
</feature>
<feature type="compositionally biased region" description="Acidic residues" evidence="2">
    <location>
        <begin position="268"/>
        <end position="284"/>
    </location>
</feature>
<feature type="sequence variant" description="In allele asgC767; unable to produce the A-signal, otherwise growth is unaffected.">
    <original>E</original>
    <variation>K</variation>
    <location>
        <position position="598"/>
    </location>
</feature>
<reference key="1">
    <citation type="journal article" date="1990" name="J. Bacteriol.">
        <title>Cloning and DNA sequence of the gene coding for the major sigma factor from Myxococcus xanthus.</title>
        <authorList>
            <person name="Inouye S."/>
        </authorList>
    </citation>
    <scope>NUCLEOTIDE SEQUENCE [GENOMIC DNA]</scope>
    <source>
        <strain>FB / DZF1</strain>
    </source>
</reference>
<reference key="2">
    <citation type="journal article" date="1995" name="Mol. Microbiol.">
        <title>A missense mutation in rpoD results in an A-signalling defect in Myxococcus xanthus.</title>
        <authorList>
            <person name="Davis J.M."/>
            <person name="Mayor J."/>
            <person name="Plamann L."/>
        </authorList>
    </citation>
    <scope>FUNCTION</scope>
    <scope>ASGC767 VARIANT</scope>
    <source>
        <strain>DK5060</strain>
    </source>
</reference>
<sequence>MPTQKPSKASVKPTKKKVDPVIRKKKAPDGAAAKGAKTGAEEKEELVARDVVAEATEKLKKKKKGVAPAMGDDVDPEEAAEEAAAAVQVDPDAVEDDIEEDPVAERKEVKDLLAAGREKGFLTYDEVNDALPADIVSSDQIDDVMSMFGDNDIEIVDAQKAAQNNEIKPTVTVEEEKEDADEDEKDEDDEPGGKSNDPVRLYLRKMGSVSLLTREGEVEIAKRIEDGEKEVLRALLACKVAVEEILDIGNKLKTAKLRVRDVIKDAPEETQSEGAEEAPEEVGEGDAPAQLAQSELNKIEQICKQIERFRKFAQDCDVLEEELSSKKKLTEVRKKEVKQEIKDLRTKMMEVLEEMRLNKKQVDRIVINLKALIERVDKAEDELRDLERRYDCSMKELRPQLKESRENPNIGKKLQKQLNLTPEQLEVLDRDVRTAVRKIKKVEEEANLPVESLRRNYDAIRLGERRAERAKSELVEANLRLVVSIAKKYTNRGLQFLDLIQEGNIGLMKAVDKFEYKRGYKFSTYATWWIRQAITRAIADQARTIRIPVHMIETINKLIRTSRYLVQEIGREPTPEEIAEKMELPLDKVRKVLKIAKEPISLETPIGEEEDSHLGDFIEDKSLVSPADAVINMNLAEQTRKVLATLTPREEKVLRMRFGIGEKSDHTLEEVGQDFEVTRERIRQIEAKALRKLRHPSRSKRLRSFVES</sequence>
<accession>P17531</accession>